<evidence type="ECO:0000255" key="1">
    <source>
        <dbReference type="HAMAP-Rule" id="MF_00115"/>
    </source>
</evidence>
<feature type="chain" id="PRO_1000015389" description="Large-conductance mechanosensitive channel">
    <location>
        <begin position="1"/>
        <end position="123"/>
    </location>
</feature>
<feature type="transmembrane region" description="Helical" evidence="1">
    <location>
        <begin position="14"/>
        <end position="34"/>
    </location>
</feature>
<feature type="transmembrane region" description="Helical" evidence="1">
    <location>
        <begin position="67"/>
        <end position="87"/>
    </location>
</feature>
<keyword id="KW-1003">Cell membrane</keyword>
<keyword id="KW-0407">Ion channel</keyword>
<keyword id="KW-0406">Ion transport</keyword>
<keyword id="KW-0472">Membrane</keyword>
<keyword id="KW-1185">Reference proteome</keyword>
<keyword id="KW-0812">Transmembrane</keyword>
<keyword id="KW-1133">Transmembrane helix</keyword>
<keyword id="KW-0813">Transport</keyword>
<sequence>MLKEFQKFIMRGNVLDLAVGVIIGSAFTGLVTSLTKNLINPILSMFAGKADLSGLYFTILGAKFTYGNFINDVLNFLIIAFVVFLLVKGINRILPSKPAKPAGPTQEELLTEIRDLLKQDQQV</sequence>
<accession>Q034S0</accession>
<gene>
    <name evidence="1" type="primary">mscL</name>
    <name type="ordered locus">LSEI_2579</name>
</gene>
<name>MSCL_LACP3</name>
<proteinExistence type="inferred from homology"/>
<reference key="1">
    <citation type="journal article" date="2006" name="Proc. Natl. Acad. Sci. U.S.A.">
        <title>Comparative genomics of the lactic acid bacteria.</title>
        <authorList>
            <person name="Makarova K.S."/>
            <person name="Slesarev A."/>
            <person name="Wolf Y.I."/>
            <person name="Sorokin A."/>
            <person name="Mirkin B."/>
            <person name="Koonin E.V."/>
            <person name="Pavlov A."/>
            <person name="Pavlova N."/>
            <person name="Karamychev V."/>
            <person name="Polouchine N."/>
            <person name="Shakhova V."/>
            <person name="Grigoriev I."/>
            <person name="Lou Y."/>
            <person name="Rohksar D."/>
            <person name="Lucas S."/>
            <person name="Huang K."/>
            <person name="Goodstein D.M."/>
            <person name="Hawkins T."/>
            <person name="Plengvidhya V."/>
            <person name="Welker D."/>
            <person name="Hughes J."/>
            <person name="Goh Y."/>
            <person name="Benson A."/>
            <person name="Baldwin K."/>
            <person name="Lee J.-H."/>
            <person name="Diaz-Muniz I."/>
            <person name="Dosti B."/>
            <person name="Smeianov V."/>
            <person name="Wechter W."/>
            <person name="Barabote R."/>
            <person name="Lorca G."/>
            <person name="Altermann E."/>
            <person name="Barrangou R."/>
            <person name="Ganesan B."/>
            <person name="Xie Y."/>
            <person name="Rawsthorne H."/>
            <person name="Tamir D."/>
            <person name="Parker C."/>
            <person name="Breidt F."/>
            <person name="Broadbent J.R."/>
            <person name="Hutkins R."/>
            <person name="O'Sullivan D."/>
            <person name="Steele J."/>
            <person name="Unlu G."/>
            <person name="Saier M.H. Jr."/>
            <person name="Klaenhammer T."/>
            <person name="Richardson P."/>
            <person name="Kozyavkin S."/>
            <person name="Weimer B.C."/>
            <person name="Mills D.A."/>
        </authorList>
    </citation>
    <scope>NUCLEOTIDE SEQUENCE [LARGE SCALE GENOMIC DNA]</scope>
    <source>
        <strain>ATCC 334 / BCRC 17002 / CCUG 31169 / CIP 107868 / KCTC 3260 / NRRL B-441</strain>
    </source>
</reference>
<protein>
    <recommendedName>
        <fullName evidence="1">Large-conductance mechanosensitive channel</fullName>
    </recommendedName>
</protein>
<organism>
    <name type="scientific">Lacticaseibacillus paracasei (strain ATCC 334 / BCRC 17002 / CCUG 31169 / CIP 107868 / KCTC 3260 / NRRL B-441)</name>
    <name type="common">Lactobacillus paracasei</name>
    <dbReference type="NCBI Taxonomy" id="321967"/>
    <lineage>
        <taxon>Bacteria</taxon>
        <taxon>Bacillati</taxon>
        <taxon>Bacillota</taxon>
        <taxon>Bacilli</taxon>
        <taxon>Lactobacillales</taxon>
        <taxon>Lactobacillaceae</taxon>
        <taxon>Lacticaseibacillus</taxon>
    </lineage>
</organism>
<dbReference type="EMBL" id="CP000423">
    <property type="protein sequence ID" value="ABJ71302.1"/>
    <property type="molecule type" value="Genomic_DNA"/>
</dbReference>
<dbReference type="RefSeq" id="WP_003571482.1">
    <property type="nucleotide sequence ID" value="NC_008526.1"/>
</dbReference>
<dbReference type="RefSeq" id="YP_807744.1">
    <property type="nucleotide sequence ID" value="NC_008526.1"/>
</dbReference>
<dbReference type="SMR" id="Q034S0"/>
<dbReference type="STRING" id="321967.LSEI_2579"/>
<dbReference type="PaxDb" id="321967-LSEI_2579"/>
<dbReference type="GeneID" id="57091149"/>
<dbReference type="KEGG" id="lca:LSEI_2579"/>
<dbReference type="PATRIC" id="fig|321967.11.peg.2520"/>
<dbReference type="HOGENOM" id="CLU_095787_0_0_9"/>
<dbReference type="Proteomes" id="UP000001651">
    <property type="component" value="Chromosome"/>
</dbReference>
<dbReference type="GO" id="GO:0005886">
    <property type="term" value="C:plasma membrane"/>
    <property type="evidence" value="ECO:0007669"/>
    <property type="project" value="UniProtKB-SubCell"/>
</dbReference>
<dbReference type="GO" id="GO:0008381">
    <property type="term" value="F:mechanosensitive monoatomic ion channel activity"/>
    <property type="evidence" value="ECO:0007669"/>
    <property type="project" value="UniProtKB-UniRule"/>
</dbReference>
<dbReference type="Gene3D" id="1.10.1200.120">
    <property type="entry name" value="Large-conductance mechanosensitive channel, MscL, domain 1"/>
    <property type="match status" value="1"/>
</dbReference>
<dbReference type="HAMAP" id="MF_00115">
    <property type="entry name" value="MscL"/>
    <property type="match status" value="1"/>
</dbReference>
<dbReference type="InterPro" id="IPR019823">
    <property type="entry name" value="Mechanosensitive_channel_CS"/>
</dbReference>
<dbReference type="InterPro" id="IPR001185">
    <property type="entry name" value="MS_channel"/>
</dbReference>
<dbReference type="InterPro" id="IPR037673">
    <property type="entry name" value="MSC/AndL"/>
</dbReference>
<dbReference type="InterPro" id="IPR036019">
    <property type="entry name" value="MscL_channel"/>
</dbReference>
<dbReference type="NCBIfam" id="TIGR00220">
    <property type="entry name" value="mscL"/>
    <property type="match status" value="1"/>
</dbReference>
<dbReference type="NCBIfam" id="NF001842">
    <property type="entry name" value="PRK00567.1-3"/>
    <property type="match status" value="1"/>
</dbReference>
<dbReference type="PANTHER" id="PTHR30266:SF2">
    <property type="entry name" value="LARGE-CONDUCTANCE MECHANOSENSITIVE CHANNEL"/>
    <property type="match status" value="1"/>
</dbReference>
<dbReference type="PANTHER" id="PTHR30266">
    <property type="entry name" value="MECHANOSENSITIVE CHANNEL MSCL"/>
    <property type="match status" value="1"/>
</dbReference>
<dbReference type="Pfam" id="PF01741">
    <property type="entry name" value="MscL"/>
    <property type="match status" value="1"/>
</dbReference>
<dbReference type="PRINTS" id="PR01264">
    <property type="entry name" value="MECHCHANNEL"/>
</dbReference>
<dbReference type="SUPFAM" id="SSF81330">
    <property type="entry name" value="Gated mechanosensitive channel"/>
    <property type="match status" value="1"/>
</dbReference>
<dbReference type="PROSITE" id="PS01327">
    <property type="entry name" value="MSCL"/>
    <property type="match status" value="1"/>
</dbReference>
<comment type="function">
    <text evidence="1">Channel that opens in response to stretch forces in the membrane lipid bilayer. May participate in the regulation of osmotic pressure changes within the cell.</text>
</comment>
<comment type="subunit">
    <text evidence="1">Homopentamer.</text>
</comment>
<comment type="subcellular location">
    <subcellularLocation>
        <location evidence="1">Cell membrane</location>
        <topology evidence="1">Multi-pass membrane protein</topology>
    </subcellularLocation>
</comment>
<comment type="similarity">
    <text evidence="1">Belongs to the MscL family.</text>
</comment>